<proteinExistence type="inferred from homology"/>
<feature type="chain" id="PRO_0000298392" description="Disulfide bond formation protein B 1">
    <location>
        <begin position="1"/>
        <end position="169"/>
    </location>
</feature>
<feature type="topological domain" description="Cytoplasmic" evidence="1">
    <location>
        <begin position="1"/>
        <end position="14"/>
    </location>
</feature>
<feature type="transmembrane region" description="Helical" evidence="1">
    <location>
        <begin position="15"/>
        <end position="31"/>
    </location>
</feature>
<feature type="topological domain" description="Periplasmic" evidence="1">
    <location>
        <begin position="32"/>
        <end position="49"/>
    </location>
</feature>
<feature type="transmembrane region" description="Helical" evidence="1">
    <location>
        <begin position="50"/>
        <end position="64"/>
    </location>
</feature>
<feature type="topological domain" description="Cytoplasmic" evidence="1">
    <location>
        <begin position="65"/>
        <end position="71"/>
    </location>
</feature>
<feature type="transmembrane region" description="Helical" evidence="1">
    <location>
        <begin position="72"/>
        <end position="89"/>
    </location>
</feature>
<feature type="topological domain" description="Periplasmic" evidence="1">
    <location>
        <begin position="90"/>
        <end position="144"/>
    </location>
</feature>
<feature type="transmembrane region" description="Helical" evidence="1">
    <location>
        <begin position="145"/>
        <end position="163"/>
    </location>
</feature>
<feature type="topological domain" description="Cytoplasmic" evidence="1">
    <location>
        <begin position="164"/>
        <end position="169"/>
    </location>
</feature>
<feature type="disulfide bond" description="Redox-active" evidence="1">
    <location>
        <begin position="41"/>
        <end position="44"/>
    </location>
</feature>
<feature type="disulfide bond" description="Redox-active" evidence="1">
    <location>
        <begin position="102"/>
        <end position="130"/>
    </location>
</feature>
<comment type="function">
    <text evidence="1">Required for disulfide bond formation in some periplasmic proteins. Acts by oxidizing the DsbA protein.</text>
</comment>
<comment type="subcellular location">
    <subcellularLocation>
        <location evidence="1">Cell inner membrane</location>
        <topology evidence="1">Multi-pass membrane protein</topology>
    </subcellularLocation>
</comment>
<comment type="similarity">
    <text evidence="1">Belongs to the DsbB family.</text>
</comment>
<sequence>MSDNTLYLRREKRFLVLLGIICLALIGGALYMQIVLGEAPCPLCILQRYALLFIAIFAFIGAAMSGRRGVTVCETLVTLSALGGIAAAGRHVWILAHPSDSCGIDVLQPIVDGLPLATLFPTGFQVSGFCTTPYPPVLGLSLAQWALAAFVLTAVLVPACIIRNRRKPY</sequence>
<accession>Q48M97</accession>
<protein>
    <recommendedName>
        <fullName evidence="1">Disulfide bond formation protein B 1</fullName>
    </recommendedName>
    <alternativeName>
        <fullName evidence="1">Disulfide oxidoreductase 1</fullName>
    </alternativeName>
</protein>
<dbReference type="EMBL" id="CP000058">
    <property type="protein sequence ID" value="AAZ36741.1"/>
    <property type="molecule type" value="Genomic_DNA"/>
</dbReference>
<dbReference type="RefSeq" id="WP_004666118.1">
    <property type="nucleotide sequence ID" value="NC_005773.3"/>
</dbReference>
<dbReference type="SMR" id="Q48M97"/>
<dbReference type="KEGG" id="psp:PSPPH_1209"/>
<dbReference type="eggNOG" id="COG1495">
    <property type="taxonomic scope" value="Bacteria"/>
</dbReference>
<dbReference type="HOGENOM" id="CLU_098660_1_0_6"/>
<dbReference type="Proteomes" id="UP000000551">
    <property type="component" value="Chromosome"/>
</dbReference>
<dbReference type="GO" id="GO:0005886">
    <property type="term" value="C:plasma membrane"/>
    <property type="evidence" value="ECO:0007669"/>
    <property type="project" value="UniProtKB-SubCell"/>
</dbReference>
<dbReference type="GO" id="GO:0009055">
    <property type="term" value="F:electron transfer activity"/>
    <property type="evidence" value="ECO:0007669"/>
    <property type="project" value="UniProtKB-UniRule"/>
</dbReference>
<dbReference type="GO" id="GO:0015035">
    <property type="term" value="F:protein-disulfide reductase activity"/>
    <property type="evidence" value="ECO:0007669"/>
    <property type="project" value="UniProtKB-UniRule"/>
</dbReference>
<dbReference type="GO" id="GO:0006457">
    <property type="term" value="P:protein folding"/>
    <property type="evidence" value="ECO:0007669"/>
    <property type="project" value="InterPro"/>
</dbReference>
<dbReference type="Gene3D" id="1.20.1550.10">
    <property type="entry name" value="DsbB-like"/>
    <property type="match status" value="1"/>
</dbReference>
<dbReference type="HAMAP" id="MF_00286">
    <property type="entry name" value="DsbB"/>
    <property type="match status" value="1"/>
</dbReference>
<dbReference type="InterPro" id="IPR003752">
    <property type="entry name" value="DiS_bond_form_DsbB/BdbC"/>
</dbReference>
<dbReference type="InterPro" id="IPR022920">
    <property type="entry name" value="Disulphide_bond_form_DsbB"/>
</dbReference>
<dbReference type="InterPro" id="IPR050183">
    <property type="entry name" value="DsbB"/>
</dbReference>
<dbReference type="InterPro" id="IPR023380">
    <property type="entry name" value="DsbB-like_sf"/>
</dbReference>
<dbReference type="NCBIfam" id="NF002552">
    <property type="entry name" value="PRK02110.1"/>
    <property type="match status" value="1"/>
</dbReference>
<dbReference type="PANTHER" id="PTHR36570">
    <property type="entry name" value="DISULFIDE BOND FORMATION PROTEIN B"/>
    <property type="match status" value="1"/>
</dbReference>
<dbReference type="PANTHER" id="PTHR36570:SF3">
    <property type="entry name" value="DISULFIDE BOND FORMATION PROTEIN B"/>
    <property type="match status" value="1"/>
</dbReference>
<dbReference type="Pfam" id="PF02600">
    <property type="entry name" value="DsbB"/>
    <property type="match status" value="1"/>
</dbReference>
<dbReference type="SUPFAM" id="SSF158442">
    <property type="entry name" value="DsbB-like"/>
    <property type="match status" value="1"/>
</dbReference>
<name>DSBB1_PSE14</name>
<organism>
    <name type="scientific">Pseudomonas savastanoi pv. phaseolicola (strain 1448A / Race 6)</name>
    <name type="common">Pseudomonas syringae pv. phaseolicola (strain 1448A / Race 6)</name>
    <dbReference type="NCBI Taxonomy" id="264730"/>
    <lineage>
        <taxon>Bacteria</taxon>
        <taxon>Pseudomonadati</taxon>
        <taxon>Pseudomonadota</taxon>
        <taxon>Gammaproteobacteria</taxon>
        <taxon>Pseudomonadales</taxon>
        <taxon>Pseudomonadaceae</taxon>
        <taxon>Pseudomonas</taxon>
    </lineage>
</organism>
<keyword id="KW-0997">Cell inner membrane</keyword>
<keyword id="KW-1003">Cell membrane</keyword>
<keyword id="KW-0143">Chaperone</keyword>
<keyword id="KW-1015">Disulfide bond</keyword>
<keyword id="KW-0249">Electron transport</keyword>
<keyword id="KW-0472">Membrane</keyword>
<keyword id="KW-0560">Oxidoreductase</keyword>
<keyword id="KW-0676">Redox-active center</keyword>
<keyword id="KW-0812">Transmembrane</keyword>
<keyword id="KW-1133">Transmembrane helix</keyword>
<keyword id="KW-0813">Transport</keyword>
<evidence type="ECO:0000255" key="1">
    <source>
        <dbReference type="HAMAP-Rule" id="MF_00286"/>
    </source>
</evidence>
<reference key="1">
    <citation type="journal article" date="2005" name="J. Bacteriol.">
        <title>Whole-genome sequence analysis of Pseudomonas syringae pv. phaseolicola 1448A reveals divergence among pathovars in genes involved in virulence and transposition.</title>
        <authorList>
            <person name="Joardar V."/>
            <person name="Lindeberg M."/>
            <person name="Jackson R.W."/>
            <person name="Selengut J."/>
            <person name="Dodson R."/>
            <person name="Brinkac L.M."/>
            <person name="Daugherty S.C."/>
            <person name="DeBoy R.T."/>
            <person name="Durkin A.S."/>
            <person name="Gwinn Giglio M."/>
            <person name="Madupu R."/>
            <person name="Nelson W.C."/>
            <person name="Rosovitz M.J."/>
            <person name="Sullivan S.A."/>
            <person name="Crabtree J."/>
            <person name="Creasy T."/>
            <person name="Davidsen T.M."/>
            <person name="Haft D.H."/>
            <person name="Zafar N."/>
            <person name="Zhou L."/>
            <person name="Halpin R."/>
            <person name="Holley T."/>
            <person name="Khouri H.M."/>
            <person name="Feldblyum T.V."/>
            <person name="White O."/>
            <person name="Fraser C.M."/>
            <person name="Chatterjee A.K."/>
            <person name="Cartinhour S."/>
            <person name="Schneider D."/>
            <person name="Mansfield J.W."/>
            <person name="Collmer A."/>
            <person name="Buell R."/>
        </authorList>
    </citation>
    <scope>NUCLEOTIDE SEQUENCE [LARGE SCALE GENOMIC DNA]</scope>
    <source>
        <strain>1448A / Race 6</strain>
    </source>
</reference>
<gene>
    <name evidence="1" type="primary">dsbB1</name>
    <name type="ordered locus">PSPPH_1209</name>
</gene>